<dbReference type="EMBL" id="AE005174">
    <property type="protein sequence ID" value="AAG55262.1"/>
    <property type="molecule type" value="Genomic_DNA"/>
</dbReference>
<dbReference type="EMBL" id="BA000007">
    <property type="protein sequence ID" value="BAB34389.1"/>
    <property type="molecule type" value="Genomic_DNA"/>
</dbReference>
<dbReference type="PIR" id="B85600">
    <property type="entry name" value="B85600"/>
</dbReference>
<dbReference type="PIR" id="F90749">
    <property type="entry name" value="F90749"/>
</dbReference>
<dbReference type="RefSeq" id="NP_308993.1">
    <property type="nucleotide sequence ID" value="NC_002695.1"/>
</dbReference>
<dbReference type="RefSeq" id="WP_000410785.1">
    <property type="nucleotide sequence ID" value="NZ_VOAI01000006.1"/>
</dbReference>
<dbReference type="SMR" id="P0A970"/>
<dbReference type="STRING" id="155864.Z1117"/>
<dbReference type="GeneID" id="917710"/>
<dbReference type="GeneID" id="93776540"/>
<dbReference type="KEGG" id="ece:Z1117"/>
<dbReference type="KEGG" id="ecs:ECs_0966"/>
<dbReference type="PATRIC" id="fig|386585.9.peg.1082"/>
<dbReference type="eggNOG" id="COG1278">
    <property type="taxonomic scope" value="Bacteria"/>
</dbReference>
<dbReference type="HOGENOM" id="CLU_117621_0_2_6"/>
<dbReference type="OMA" id="HYSTIKM"/>
<dbReference type="Proteomes" id="UP000000558">
    <property type="component" value="Chromosome"/>
</dbReference>
<dbReference type="Proteomes" id="UP000002519">
    <property type="component" value="Chromosome"/>
</dbReference>
<dbReference type="GO" id="GO:0005829">
    <property type="term" value="C:cytosol"/>
    <property type="evidence" value="ECO:0007669"/>
    <property type="project" value="UniProtKB-ARBA"/>
</dbReference>
<dbReference type="GO" id="GO:0003677">
    <property type="term" value="F:DNA binding"/>
    <property type="evidence" value="ECO:0007669"/>
    <property type="project" value="UniProtKB-KW"/>
</dbReference>
<dbReference type="GO" id="GO:0003723">
    <property type="term" value="F:RNA binding"/>
    <property type="evidence" value="ECO:0007669"/>
    <property type="project" value="UniProtKB-KW"/>
</dbReference>
<dbReference type="GO" id="GO:0008156">
    <property type="term" value="P:negative regulation of DNA replication"/>
    <property type="evidence" value="ECO:0007669"/>
    <property type="project" value="UniProtKB-KW"/>
</dbReference>
<dbReference type="GO" id="GO:0006355">
    <property type="term" value="P:regulation of DNA-templated transcription"/>
    <property type="evidence" value="ECO:0007669"/>
    <property type="project" value="InterPro"/>
</dbReference>
<dbReference type="CDD" id="cd04458">
    <property type="entry name" value="CSP_CDS"/>
    <property type="match status" value="1"/>
</dbReference>
<dbReference type="FunFam" id="2.40.50.140:FF:000006">
    <property type="entry name" value="Cold shock protein CspC"/>
    <property type="match status" value="1"/>
</dbReference>
<dbReference type="Gene3D" id="2.40.50.140">
    <property type="entry name" value="Nucleic acid-binding proteins"/>
    <property type="match status" value="1"/>
</dbReference>
<dbReference type="InterPro" id="IPR012156">
    <property type="entry name" value="Cold_shock_CspA"/>
</dbReference>
<dbReference type="InterPro" id="IPR050181">
    <property type="entry name" value="Cold_shock_domain"/>
</dbReference>
<dbReference type="InterPro" id="IPR011129">
    <property type="entry name" value="CSD"/>
</dbReference>
<dbReference type="InterPro" id="IPR019844">
    <property type="entry name" value="CSD_CS"/>
</dbReference>
<dbReference type="InterPro" id="IPR002059">
    <property type="entry name" value="CSP_DNA-bd"/>
</dbReference>
<dbReference type="InterPro" id="IPR012751">
    <property type="entry name" value="CspD"/>
</dbReference>
<dbReference type="InterPro" id="IPR012340">
    <property type="entry name" value="NA-bd_OB-fold"/>
</dbReference>
<dbReference type="NCBIfam" id="TIGR02381">
    <property type="entry name" value="cspD"/>
    <property type="match status" value="1"/>
</dbReference>
<dbReference type="NCBIfam" id="NF007405">
    <property type="entry name" value="PRK09937.1"/>
    <property type="match status" value="1"/>
</dbReference>
<dbReference type="NCBIfam" id="NF011574">
    <property type="entry name" value="PRK14998.1"/>
    <property type="match status" value="1"/>
</dbReference>
<dbReference type="PANTHER" id="PTHR11544">
    <property type="entry name" value="COLD SHOCK DOMAIN CONTAINING PROTEINS"/>
    <property type="match status" value="1"/>
</dbReference>
<dbReference type="Pfam" id="PF00313">
    <property type="entry name" value="CSD"/>
    <property type="match status" value="1"/>
</dbReference>
<dbReference type="PIRSF" id="PIRSF002599">
    <property type="entry name" value="Cold_shock_A"/>
    <property type="match status" value="1"/>
</dbReference>
<dbReference type="PRINTS" id="PR00050">
    <property type="entry name" value="COLDSHOCK"/>
</dbReference>
<dbReference type="SMART" id="SM00357">
    <property type="entry name" value="CSP"/>
    <property type="match status" value="1"/>
</dbReference>
<dbReference type="SUPFAM" id="SSF50249">
    <property type="entry name" value="Nucleic acid-binding proteins"/>
    <property type="match status" value="1"/>
</dbReference>
<dbReference type="PROSITE" id="PS00352">
    <property type="entry name" value="CSD_1"/>
    <property type="match status" value="1"/>
</dbReference>
<dbReference type="PROSITE" id="PS51857">
    <property type="entry name" value="CSD_2"/>
    <property type="match status" value="1"/>
</dbReference>
<sequence>MEKGTVKWFNNAKGFGFICPEGGGEDIFAHYSTIQMDGYRTLKAGQSVQFDVHQGPKGNHASVIVPVEVEAAVA</sequence>
<gene>
    <name type="primary">cspD</name>
    <name type="ordered locus">Z1117</name>
    <name type="ordered locus">ECs0966</name>
</gene>
<comment type="function">
    <text evidence="1">Inhibits DNA replication at both initiation and elongation steps, most probably by binding to the opened, single-stranded regions at replication forks. Plays a regulatory role in chromosomal replication in nutrient-depleted cells (By similarity).</text>
</comment>
<comment type="subunit">
    <text evidence="1">Homodimer.</text>
</comment>
<comment type="subcellular location">
    <subcellularLocation>
        <location evidence="1">Cytoplasm</location>
    </subcellularLocation>
</comment>
<comment type="miscellaneous">
    <text evidence="1">Binds single-stranded DNA and RNA, but not double-stranded DNA, through hydrophobic interaction without sequence specificity, resulting in a packed structure.</text>
</comment>
<organism>
    <name type="scientific">Escherichia coli O157:H7</name>
    <dbReference type="NCBI Taxonomy" id="83334"/>
    <lineage>
        <taxon>Bacteria</taxon>
        <taxon>Pseudomonadati</taxon>
        <taxon>Pseudomonadota</taxon>
        <taxon>Gammaproteobacteria</taxon>
        <taxon>Enterobacterales</taxon>
        <taxon>Enterobacteriaceae</taxon>
        <taxon>Escherichia</taxon>
    </lineage>
</organism>
<evidence type="ECO:0000250" key="1"/>
<name>CSPD_ECO57</name>
<accession>P0A970</accession>
<accession>P24245</accession>
<reference key="1">
    <citation type="journal article" date="2001" name="Nature">
        <title>Genome sequence of enterohaemorrhagic Escherichia coli O157:H7.</title>
        <authorList>
            <person name="Perna N.T."/>
            <person name="Plunkett G. III"/>
            <person name="Burland V."/>
            <person name="Mau B."/>
            <person name="Glasner J.D."/>
            <person name="Rose D.J."/>
            <person name="Mayhew G.F."/>
            <person name="Evans P.S."/>
            <person name="Gregor J."/>
            <person name="Kirkpatrick H.A."/>
            <person name="Posfai G."/>
            <person name="Hackett J."/>
            <person name="Klink S."/>
            <person name="Boutin A."/>
            <person name="Shao Y."/>
            <person name="Miller L."/>
            <person name="Grotbeck E.J."/>
            <person name="Davis N.W."/>
            <person name="Lim A."/>
            <person name="Dimalanta E.T."/>
            <person name="Potamousis K."/>
            <person name="Apodaca J."/>
            <person name="Anantharaman T.S."/>
            <person name="Lin J."/>
            <person name="Yen G."/>
            <person name="Schwartz D.C."/>
            <person name="Welch R.A."/>
            <person name="Blattner F.R."/>
        </authorList>
    </citation>
    <scope>NUCLEOTIDE SEQUENCE [LARGE SCALE GENOMIC DNA]</scope>
    <source>
        <strain>O157:H7 / EDL933 / ATCC 700927 / EHEC</strain>
    </source>
</reference>
<reference key="2">
    <citation type="journal article" date="2001" name="DNA Res.">
        <title>Complete genome sequence of enterohemorrhagic Escherichia coli O157:H7 and genomic comparison with a laboratory strain K-12.</title>
        <authorList>
            <person name="Hayashi T."/>
            <person name="Makino K."/>
            <person name="Ohnishi M."/>
            <person name="Kurokawa K."/>
            <person name="Ishii K."/>
            <person name="Yokoyama K."/>
            <person name="Han C.-G."/>
            <person name="Ohtsubo E."/>
            <person name="Nakayama K."/>
            <person name="Murata T."/>
            <person name="Tanaka M."/>
            <person name="Tobe T."/>
            <person name="Iida T."/>
            <person name="Takami H."/>
            <person name="Honda T."/>
            <person name="Sasakawa C."/>
            <person name="Ogasawara N."/>
            <person name="Yasunaga T."/>
            <person name="Kuhara S."/>
            <person name="Shiba T."/>
            <person name="Hattori M."/>
            <person name="Shinagawa H."/>
        </authorList>
    </citation>
    <scope>NUCLEOTIDE SEQUENCE [LARGE SCALE GENOMIC DNA]</scope>
    <source>
        <strain>O157:H7 / Sakai / RIMD 0509952 / EHEC</strain>
    </source>
</reference>
<feature type="chain" id="PRO_0000100249" description="Cold shock-like protein CspD">
    <location>
        <begin position="1"/>
        <end position="74"/>
    </location>
</feature>
<feature type="domain" description="CSD">
    <location>
        <begin position="4"/>
        <end position="64"/>
    </location>
</feature>
<proteinExistence type="inferred from homology"/>
<keyword id="KW-0963">Cytoplasm</keyword>
<keyword id="KW-0236">DNA replication inhibitor</keyword>
<keyword id="KW-0238">DNA-binding</keyword>
<keyword id="KW-1185">Reference proteome</keyword>
<keyword id="KW-0694">RNA-binding</keyword>
<protein>
    <recommendedName>
        <fullName>Cold shock-like protein CspD</fullName>
        <shortName>CSP-D</shortName>
    </recommendedName>
</protein>